<proteinExistence type="inferred from homology"/>
<accession>A5DEY7</accession>
<keyword id="KW-0963">Cytoplasm</keyword>
<keyword id="KW-0396">Initiation factor</keyword>
<keyword id="KW-0597">Phosphoprotein</keyword>
<keyword id="KW-0648">Protein biosynthesis</keyword>
<keyword id="KW-0652">Protein synthesis inhibitor</keyword>
<keyword id="KW-1185">Reference proteome</keyword>
<keyword id="KW-0810">Translation regulation</keyword>
<comment type="function">
    <text evidence="1">Acts as an inhibitor of cap-dependent translation. Competes with eIF4G1 and EAP1 for binding to eIF4E and interferes with the formation of the eIF4F complex, inhibiting translation and stabilizing mRNA (By similarity).</text>
</comment>
<comment type="subcellular location">
    <subcellularLocation>
        <location evidence="1">Cytoplasm</location>
    </subcellularLocation>
</comment>
<comment type="similarity">
    <text evidence="3">Belongs to the CAF20 family.</text>
</comment>
<comment type="sequence caution" evidence="3">
    <conflict type="erroneous initiation">
        <sequence resource="EMBL-CDS" id="EDK37740"/>
    </conflict>
</comment>
<protein>
    <recommendedName>
        <fullName>Cap-associated protein CAF20</fullName>
    </recommendedName>
</protein>
<gene>
    <name type="primary">CAF20</name>
    <name type="ORF">PGUG_01838</name>
</gene>
<organism>
    <name type="scientific">Meyerozyma guilliermondii (strain ATCC 6260 / CBS 566 / DSM 6381 / JCM 1539 / NBRC 10279 / NRRL Y-324)</name>
    <name type="common">Yeast</name>
    <name type="synonym">Candida guilliermondii</name>
    <dbReference type="NCBI Taxonomy" id="294746"/>
    <lineage>
        <taxon>Eukaryota</taxon>
        <taxon>Fungi</taxon>
        <taxon>Dikarya</taxon>
        <taxon>Ascomycota</taxon>
        <taxon>Saccharomycotina</taxon>
        <taxon>Pichiomycetes</taxon>
        <taxon>Debaryomycetaceae</taxon>
        <taxon>Meyerozyma</taxon>
    </lineage>
</organism>
<dbReference type="EMBL" id="CH408156">
    <property type="protein sequence ID" value="EDK37740.1"/>
    <property type="status" value="ALT_INIT"/>
    <property type="molecule type" value="Genomic_DNA"/>
</dbReference>
<dbReference type="RefSeq" id="XP_001486167.1">
    <property type="nucleotide sequence ID" value="XM_001486117.1"/>
</dbReference>
<dbReference type="SMR" id="A5DEY7"/>
<dbReference type="FunCoup" id="A5DEY7">
    <property type="interactions" value="355"/>
</dbReference>
<dbReference type="STRING" id="294746.A5DEY7"/>
<dbReference type="GeneID" id="5127580"/>
<dbReference type="KEGG" id="pgu:PGUG_01838"/>
<dbReference type="eggNOG" id="ENOG502S2E7">
    <property type="taxonomic scope" value="Eukaryota"/>
</dbReference>
<dbReference type="HOGENOM" id="CLU_128343_0_0_1"/>
<dbReference type="InParanoid" id="A5DEY7"/>
<dbReference type="OrthoDB" id="3995390at2759"/>
<dbReference type="Proteomes" id="UP000001997">
    <property type="component" value="Unassembled WGS sequence"/>
</dbReference>
<dbReference type="GO" id="GO:0005737">
    <property type="term" value="C:cytoplasm"/>
    <property type="evidence" value="ECO:0007669"/>
    <property type="project" value="UniProtKB-SubCell"/>
</dbReference>
<dbReference type="GO" id="GO:0008190">
    <property type="term" value="F:eukaryotic initiation factor 4E binding"/>
    <property type="evidence" value="ECO:0007669"/>
    <property type="project" value="InterPro"/>
</dbReference>
<dbReference type="GO" id="GO:0003743">
    <property type="term" value="F:translation initiation factor activity"/>
    <property type="evidence" value="ECO:0007669"/>
    <property type="project" value="UniProtKB-KW"/>
</dbReference>
<dbReference type="GO" id="GO:0017148">
    <property type="term" value="P:negative regulation of translation"/>
    <property type="evidence" value="ECO:0007669"/>
    <property type="project" value="UniProtKB-KW"/>
</dbReference>
<dbReference type="InterPro" id="IPR031456">
    <property type="entry name" value="Caf20"/>
</dbReference>
<dbReference type="Pfam" id="PF17052">
    <property type="entry name" value="CAF20"/>
    <property type="match status" value="1"/>
</dbReference>
<evidence type="ECO:0000250" key="1"/>
<evidence type="ECO:0000256" key="2">
    <source>
        <dbReference type="SAM" id="MobiDB-lite"/>
    </source>
</evidence>
<evidence type="ECO:0000305" key="3"/>
<feature type="chain" id="PRO_0000330089" description="Cap-associated protein CAF20">
    <location>
        <begin position="1"/>
        <end position="173"/>
    </location>
</feature>
<feature type="region of interest" description="Disordered" evidence="2">
    <location>
        <begin position="49"/>
        <end position="91"/>
    </location>
</feature>
<feature type="region of interest" description="Disordered" evidence="2">
    <location>
        <begin position="105"/>
        <end position="149"/>
    </location>
</feature>
<feature type="compositionally biased region" description="Basic and acidic residues" evidence="2">
    <location>
        <begin position="115"/>
        <end position="129"/>
    </location>
</feature>
<name>CAF20_PICGU</name>
<sequence length="173" mass="19539">MVKYTEDELLEFQEIAYNPQPQVLDAFNQMVDEVREHANAEIERQKHLKWSNGDTYIDENGNERPYHHLNRRRGSRSGAKPNLKRKGAESVTVDDDGWATLAKPKKSFGAEEAGEERTKFRDSLKDGSVKARPNNKNLGSSKAVDPRDAIADKNTISFNAFEALGDDSDDDDE</sequence>
<reference key="1">
    <citation type="journal article" date="2009" name="Nature">
        <title>Evolution of pathogenicity and sexual reproduction in eight Candida genomes.</title>
        <authorList>
            <person name="Butler G."/>
            <person name="Rasmussen M.D."/>
            <person name="Lin M.F."/>
            <person name="Santos M.A.S."/>
            <person name="Sakthikumar S."/>
            <person name="Munro C.A."/>
            <person name="Rheinbay E."/>
            <person name="Grabherr M."/>
            <person name="Forche A."/>
            <person name="Reedy J.L."/>
            <person name="Agrafioti I."/>
            <person name="Arnaud M.B."/>
            <person name="Bates S."/>
            <person name="Brown A.J.P."/>
            <person name="Brunke S."/>
            <person name="Costanzo M.C."/>
            <person name="Fitzpatrick D.A."/>
            <person name="de Groot P.W.J."/>
            <person name="Harris D."/>
            <person name="Hoyer L.L."/>
            <person name="Hube B."/>
            <person name="Klis F.M."/>
            <person name="Kodira C."/>
            <person name="Lennard N."/>
            <person name="Logue M.E."/>
            <person name="Martin R."/>
            <person name="Neiman A.M."/>
            <person name="Nikolaou E."/>
            <person name="Quail M.A."/>
            <person name="Quinn J."/>
            <person name="Santos M.C."/>
            <person name="Schmitzberger F.F."/>
            <person name="Sherlock G."/>
            <person name="Shah P."/>
            <person name="Silverstein K.A.T."/>
            <person name="Skrzypek M.S."/>
            <person name="Soll D."/>
            <person name="Staggs R."/>
            <person name="Stansfield I."/>
            <person name="Stumpf M.P.H."/>
            <person name="Sudbery P.E."/>
            <person name="Srikantha T."/>
            <person name="Zeng Q."/>
            <person name="Berman J."/>
            <person name="Berriman M."/>
            <person name="Heitman J."/>
            <person name="Gow N.A.R."/>
            <person name="Lorenz M.C."/>
            <person name="Birren B.W."/>
            <person name="Kellis M."/>
            <person name="Cuomo C.A."/>
        </authorList>
    </citation>
    <scope>NUCLEOTIDE SEQUENCE [LARGE SCALE GENOMIC DNA]</scope>
    <source>
        <strain>ATCC 6260 / CBS 566 / DSM 6381 / JCM 1539 / NBRC 10279 / NRRL Y-324</strain>
    </source>
</reference>